<feature type="chain" id="PRO_0000447288" description="Agamous-like MADS-box protein AP3">
    <location>
        <begin position="1"/>
        <end position="226"/>
    </location>
</feature>
<feature type="domain" description="MADS-box" evidence="2">
    <location>
        <begin position="1"/>
        <end position="61"/>
    </location>
</feature>
<feature type="domain" description="K-box" evidence="3">
    <location>
        <begin position="84"/>
        <end position="174"/>
    </location>
</feature>
<feature type="sequence conflict" description="In Ref. 1; ABN71371 and 2; ACZ26526." evidence="8" ref="1 2">
    <original>H</original>
    <variation>Y</variation>
    <location>
        <position position="176"/>
    </location>
</feature>
<protein>
    <recommendedName>
        <fullName evidence="8">Agamous-like MADS-box protein AP3</fullName>
    </recommendedName>
    <alternativeName>
        <fullName evidence="6">VvAP3.1</fullName>
    </alternativeName>
    <alternativeName>
        <fullName evidence="7">VviAP3a</fullName>
    </alternativeName>
</protein>
<gene>
    <name evidence="5" type="primary">AP3</name>
    <name evidence="9" type="ordered locus">VIT_18s0001g13460</name>
</gene>
<name>AP3_VITVI</name>
<proteinExistence type="evidence at transcript level"/>
<comment type="function">
    <text evidence="1">Probable transcription factor involved in flower development.</text>
</comment>
<comment type="subcellular location">
    <subcellularLocation>
        <location evidence="2">Nucleus</location>
    </subcellularLocation>
</comment>
<comment type="tissue specificity">
    <text evidence="4">Expressed during flower development in stamens and petals.</text>
</comment>
<sequence length="226" mass="26194">MARGKIEIKRIENSTNRQVTYSKRRNGIFKKASELTVLCDAKVSIIMLSSTGKLHEYISPSTTTKQIFDQYQNTLGVDLWSYHYERMQENLKKLKDVNKNLRKEIRQRMGEHLSDLSVEELRDLEQEMESSLKMVRDRKYQVINNQIETFKKKVRNVEQIHKNLLHEFDARDRDQHYGLVDNGGDYESVLGFSNGSSPVFALSLQPNPPNDLHSGVGSDLTFTLLE</sequence>
<reference key="1">
    <citation type="journal article" date="2007" name="Gene">
        <title>Isolation of the three grape sub-lineages of B-class MADS-box TM6, PISTILLATA and APETALA3 genes which are differentially expressed during flower and fruit development.</title>
        <authorList>
            <person name="Poupin M.J."/>
            <person name="Federici F."/>
            <person name="Medina C."/>
            <person name="Matus J.T."/>
            <person name="Timmermann T."/>
            <person name="Arce-Johnson P."/>
        </authorList>
    </citation>
    <scope>NUCLEOTIDE SEQUENCE [MRNA]</scope>
    <scope>TISSUE SPECIFICITY</scope>
    <source>
        <strain>cv. Cabernet Sauvignon</strain>
    </source>
</reference>
<reference key="2">
    <citation type="submission" date="2009-10" db="EMBL/GenBank/DDBJ databases">
        <title>Characterization of seven important genes involved in grapevine flower development.</title>
        <authorList>
            <person name="Fang J.G."/>
            <person name="Yang G."/>
            <person name="Song C.N."/>
            <person name="Wang W.Y."/>
            <person name="Wang Y.J."/>
        </authorList>
    </citation>
    <scope>NUCLEOTIDE SEQUENCE [MRNA]</scope>
    <source>
        <strain>cv. Xiangyue</strain>
        <tissue>Flower</tissue>
    </source>
</reference>
<reference key="3">
    <citation type="journal article" date="2007" name="Nature">
        <title>The grapevine genome sequence suggests ancestral hexaploidization in major angiosperm phyla.</title>
        <authorList>
            <person name="Jaillon O."/>
            <person name="Aury J.-M."/>
            <person name="Noel B."/>
            <person name="Policriti A."/>
            <person name="Clepet C."/>
            <person name="Casagrande A."/>
            <person name="Choisne N."/>
            <person name="Aubourg S."/>
            <person name="Vitulo N."/>
            <person name="Jubin C."/>
            <person name="Vezzi A."/>
            <person name="Legeai F."/>
            <person name="Hugueney P."/>
            <person name="Dasilva C."/>
            <person name="Horner D."/>
            <person name="Mica E."/>
            <person name="Jublot D."/>
            <person name="Poulain J."/>
            <person name="Bruyere C."/>
            <person name="Billault A."/>
            <person name="Segurens B."/>
            <person name="Gouyvenoux M."/>
            <person name="Ugarte E."/>
            <person name="Cattonaro F."/>
            <person name="Anthouard V."/>
            <person name="Vico V."/>
            <person name="Del Fabbro C."/>
            <person name="Alaux M."/>
            <person name="Di Gaspero G."/>
            <person name="Dumas V."/>
            <person name="Felice N."/>
            <person name="Paillard S."/>
            <person name="Juman I."/>
            <person name="Moroldo M."/>
            <person name="Scalabrin S."/>
            <person name="Canaguier A."/>
            <person name="Le Clainche I."/>
            <person name="Malacrida G."/>
            <person name="Durand E."/>
            <person name="Pesole G."/>
            <person name="Laucou V."/>
            <person name="Chatelet P."/>
            <person name="Merdinoglu D."/>
            <person name="Delledonne M."/>
            <person name="Pezzotti M."/>
            <person name="Lecharny A."/>
            <person name="Scarpelli C."/>
            <person name="Artiguenave F."/>
            <person name="Pe M.E."/>
            <person name="Valle G."/>
            <person name="Morgante M."/>
            <person name="Caboche M."/>
            <person name="Adam-Blondon A.-F."/>
            <person name="Weissenbach J."/>
            <person name="Quetier F."/>
            <person name="Wincker P."/>
        </authorList>
    </citation>
    <scope>NUCLEOTIDE SEQUENCE [LARGE SCALE GENOMIC DNA]</scope>
    <source>
        <strain>cv. Pinot noir / PN40024</strain>
    </source>
</reference>
<reference key="4">
    <citation type="journal article" date="2009" name="Plant Physiol.">
        <title>Genome-wide analysis of MIKCC-type MADS box genes in grapevine.</title>
        <authorList>
            <person name="Diaz-Riquelme J."/>
            <person name="Lijavetzky D."/>
            <person name="Martinez-Zapater J.M."/>
            <person name="Carmona M.J."/>
        </authorList>
    </citation>
    <scope>GENE FAMILY</scope>
</reference>
<reference key="5">
    <citation type="journal article" date="2016" name="BMC Genomics">
        <title>Structural and functional annotation of the MADS-box transcription factor family in grapevine.</title>
        <authorList>
            <person name="Grimplet J."/>
            <person name="Martinez-Zapater J.M."/>
            <person name="Carmona M.J."/>
        </authorList>
    </citation>
    <scope>GENE FAMILY</scope>
</reference>
<keyword id="KW-0238">DNA-binding</keyword>
<keyword id="KW-0287">Flowering</keyword>
<keyword id="KW-0539">Nucleus</keyword>
<keyword id="KW-1185">Reference proteome</keyword>
<keyword id="KW-0804">Transcription</keyword>
<keyword id="KW-0805">Transcription regulation</keyword>
<dbReference type="EMBL" id="EF418603">
    <property type="protein sequence ID" value="ABN71371.1"/>
    <property type="molecule type" value="mRNA"/>
</dbReference>
<dbReference type="EMBL" id="GU133632">
    <property type="protein sequence ID" value="ACZ26526.1"/>
    <property type="molecule type" value="mRNA"/>
</dbReference>
<dbReference type="EMBL" id="FN595227">
    <property type="protein sequence ID" value="CBI19790.3"/>
    <property type="molecule type" value="Genomic_DNA"/>
</dbReference>
<dbReference type="RefSeq" id="NP_001267960.1">
    <property type="nucleotide sequence ID" value="NM_001281031.1"/>
</dbReference>
<dbReference type="SMR" id="E0CPH4"/>
<dbReference type="FunCoup" id="E0CPH4">
    <property type="interactions" value="214"/>
</dbReference>
<dbReference type="STRING" id="29760.E0CPH4"/>
<dbReference type="PaxDb" id="29760-VIT_18s0001g13460.t01"/>
<dbReference type="EnsemblPlants" id="Vitvi18g01044_t001">
    <property type="protein sequence ID" value="Vitvi18g01044_P001"/>
    <property type="gene ID" value="Vitvi18g01044"/>
</dbReference>
<dbReference type="GeneID" id="100233029"/>
<dbReference type="Gramene" id="Vitvi18g01044_t001">
    <property type="protein sequence ID" value="Vitvi18g01044_P001"/>
    <property type="gene ID" value="Vitvi18g01044"/>
</dbReference>
<dbReference type="KEGG" id="vvi:100233029"/>
<dbReference type="eggNOG" id="KOG0014">
    <property type="taxonomic scope" value="Eukaryota"/>
</dbReference>
<dbReference type="HOGENOM" id="CLU_053053_0_4_1"/>
<dbReference type="InParanoid" id="E0CPH4"/>
<dbReference type="OMA" id="WATQYER"/>
<dbReference type="OrthoDB" id="1898716at2759"/>
<dbReference type="Proteomes" id="UP000009183">
    <property type="component" value="Chromosome 18"/>
</dbReference>
<dbReference type="ExpressionAtlas" id="E0CPH4">
    <property type="expression patterns" value="baseline and differential"/>
</dbReference>
<dbReference type="GO" id="GO:0005634">
    <property type="term" value="C:nucleus"/>
    <property type="evidence" value="ECO:0007669"/>
    <property type="project" value="UniProtKB-SubCell"/>
</dbReference>
<dbReference type="GO" id="GO:0000981">
    <property type="term" value="F:DNA-binding transcription factor activity, RNA polymerase II-specific"/>
    <property type="evidence" value="ECO:0000318"/>
    <property type="project" value="GO_Central"/>
</dbReference>
<dbReference type="GO" id="GO:0046983">
    <property type="term" value="F:protein dimerization activity"/>
    <property type="evidence" value="ECO:0007669"/>
    <property type="project" value="InterPro"/>
</dbReference>
<dbReference type="GO" id="GO:0000978">
    <property type="term" value="F:RNA polymerase II cis-regulatory region sequence-specific DNA binding"/>
    <property type="evidence" value="ECO:0000318"/>
    <property type="project" value="GO_Central"/>
</dbReference>
<dbReference type="GO" id="GO:0009908">
    <property type="term" value="P:flower development"/>
    <property type="evidence" value="ECO:0007669"/>
    <property type="project" value="UniProtKB-KW"/>
</dbReference>
<dbReference type="GO" id="GO:0045944">
    <property type="term" value="P:positive regulation of transcription by RNA polymerase II"/>
    <property type="evidence" value="ECO:0007669"/>
    <property type="project" value="InterPro"/>
</dbReference>
<dbReference type="GO" id="GO:0006357">
    <property type="term" value="P:regulation of transcription by RNA polymerase II"/>
    <property type="evidence" value="ECO:0000318"/>
    <property type="project" value="GO_Central"/>
</dbReference>
<dbReference type="CDD" id="cd00265">
    <property type="entry name" value="MADS_MEF2_like"/>
    <property type="match status" value="1"/>
</dbReference>
<dbReference type="FunFam" id="3.40.1810.10:FF:000016">
    <property type="entry name" value="MADS-box transcription factor 16"/>
    <property type="match status" value="1"/>
</dbReference>
<dbReference type="Gene3D" id="3.40.1810.10">
    <property type="entry name" value="Transcription factor, MADS-box"/>
    <property type="match status" value="1"/>
</dbReference>
<dbReference type="InterPro" id="IPR050142">
    <property type="entry name" value="MADS-box/MEF2_TF"/>
</dbReference>
<dbReference type="InterPro" id="IPR033896">
    <property type="entry name" value="MEF2-like_N"/>
</dbReference>
<dbReference type="InterPro" id="IPR002487">
    <property type="entry name" value="TF_Kbox"/>
</dbReference>
<dbReference type="InterPro" id="IPR002100">
    <property type="entry name" value="TF_MADSbox"/>
</dbReference>
<dbReference type="InterPro" id="IPR036879">
    <property type="entry name" value="TF_MADSbox_sf"/>
</dbReference>
<dbReference type="PANTHER" id="PTHR48019">
    <property type="entry name" value="SERUM RESPONSE FACTOR HOMOLOG"/>
    <property type="match status" value="1"/>
</dbReference>
<dbReference type="Pfam" id="PF01486">
    <property type="entry name" value="K-box"/>
    <property type="match status" value="1"/>
</dbReference>
<dbReference type="Pfam" id="PF00319">
    <property type="entry name" value="SRF-TF"/>
    <property type="match status" value="1"/>
</dbReference>
<dbReference type="PRINTS" id="PR00404">
    <property type="entry name" value="MADSDOMAIN"/>
</dbReference>
<dbReference type="SMART" id="SM00432">
    <property type="entry name" value="MADS"/>
    <property type="match status" value="1"/>
</dbReference>
<dbReference type="SUPFAM" id="SSF55455">
    <property type="entry name" value="SRF-like"/>
    <property type="match status" value="1"/>
</dbReference>
<dbReference type="PROSITE" id="PS51297">
    <property type="entry name" value="K_BOX"/>
    <property type="match status" value="1"/>
</dbReference>
<dbReference type="PROSITE" id="PS00350">
    <property type="entry name" value="MADS_BOX_1"/>
    <property type="match status" value="1"/>
</dbReference>
<dbReference type="PROSITE" id="PS50066">
    <property type="entry name" value="MADS_BOX_2"/>
    <property type="match status" value="1"/>
</dbReference>
<evidence type="ECO:0000250" key="1">
    <source>
        <dbReference type="UniProtKB" id="Q0HA25"/>
    </source>
</evidence>
<evidence type="ECO:0000255" key="2">
    <source>
        <dbReference type="PROSITE-ProRule" id="PRU00251"/>
    </source>
</evidence>
<evidence type="ECO:0000255" key="3">
    <source>
        <dbReference type="PROSITE-ProRule" id="PRU00629"/>
    </source>
</evidence>
<evidence type="ECO:0000269" key="4">
    <source>
    </source>
</evidence>
<evidence type="ECO:0000303" key="5">
    <source>
    </source>
</evidence>
<evidence type="ECO:0000303" key="6">
    <source>
    </source>
</evidence>
<evidence type="ECO:0000303" key="7">
    <source>
    </source>
</evidence>
<evidence type="ECO:0000305" key="8"/>
<evidence type="ECO:0000312" key="9">
    <source>
        <dbReference type="EMBL" id="CBI19790.3"/>
    </source>
</evidence>
<accession>E0CPH4</accession>
<accession>A3RJI1</accession>
<organism>
    <name type="scientific">Vitis vinifera</name>
    <name type="common">Grape</name>
    <dbReference type="NCBI Taxonomy" id="29760"/>
    <lineage>
        <taxon>Eukaryota</taxon>
        <taxon>Viridiplantae</taxon>
        <taxon>Streptophyta</taxon>
        <taxon>Embryophyta</taxon>
        <taxon>Tracheophyta</taxon>
        <taxon>Spermatophyta</taxon>
        <taxon>Magnoliopsida</taxon>
        <taxon>eudicotyledons</taxon>
        <taxon>Gunneridae</taxon>
        <taxon>Pentapetalae</taxon>
        <taxon>rosids</taxon>
        <taxon>Vitales</taxon>
        <taxon>Vitaceae</taxon>
        <taxon>Viteae</taxon>
        <taxon>Vitis</taxon>
    </lineage>
</organism>